<protein>
    <recommendedName>
        <fullName evidence="1">ATP synthase gamma chain</fullName>
    </recommendedName>
    <alternativeName>
        <fullName evidence="1">ATP synthase F1 sector gamma subunit</fullName>
    </alternativeName>
    <alternativeName>
        <fullName evidence="1">F-ATPase gamma subunit</fullName>
    </alternativeName>
</protein>
<accession>B5BIN7</accession>
<gene>
    <name evidence="1" type="primary">atpG</name>
    <name type="ordered locus">SSPA3460</name>
</gene>
<proteinExistence type="inferred from homology"/>
<dbReference type="EMBL" id="FM200053">
    <property type="protein sequence ID" value="CAR61735.1"/>
    <property type="molecule type" value="Genomic_DNA"/>
</dbReference>
<dbReference type="RefSeq" id="WP_000896507.1">
    <property type="nucleotide sequence ID" value="NC_011147.1"/>
</dbReference>
<dbReference type="SMR" id="B5BIN7"/>
<dbReference type="KEGG" id="sek:SSPA3460"/>
<dbReference type="HOGENOM" id="CLU_050669_0_1_6"/>
<dbReference type="Proteomes" id="UP000001869">
    <property type="component" value="Chromosome"/>
</dbReference>
<dbReference type="GO" id="GO:0005886">
    <property type="term" value="C:plasma membrane"/>
    <property type="evidence" value="ECO:0007669"/>
    <property type="project" value="UniProtKB-SubCell"/>
</dbReference>
<dbReference type="GO" id="GO:0045259">
    <property type="term" value="C:proton-transporting ATP synthase complex"/>
    <property type="evidence" value="ECO:0007669"/>
    <property type="project" value="UniProtKB-KW"/>
</dbReference>
<dbReference type="GO" id="GO:0005524">
    <property type="term" value="F:ATP binding"/>
    <property type="evidence" value="ECO:0007669"/>
    <property type="project" value="UniProtKB-UniRule"/>
</dbReference>
<dbReference type="GO" id="GO:0046933">
    <property type="term" value="F:proton-transporting ATP synthase activity, rotational mechanism"/>
    <property type="evidence" value="ECO:0007669"/>
    <property type="project" value="UniProtKB-UniRule"/>
</dbReference>
<dbReference type="GO" id="GO:0042777">
    <property type="term" value="P:proton motive force-driven plasma membrane ATP synthesis"/>
    <property type="evidence" value="ECO:0007669"/>
    <property type="project" value="UniProtKB-UniRule"/>
</dbReference>
<dbReference type="CDD" id="cd12151">
    <property type="entry name" value="F1-ATPase_gamma"/>
    <property type="match status" value="1"/>
</dbReference>
<dbReference type="FunFam" id="1.10.287.80:FF:000005">
    <property type="entry name" value="ATP synthase gamma chain"/>
    <property type="match status" value="2"/>
</dbReference>
<dbReference type="FunFam" id="3.40.1380.10:FF:000001">
    <property type="entry name" value="ATP synthase gamma chain"/>
    <property type="match status" value="1"/>
</dbReference>
<dbReference type="Gene3D" id="3.40.1380.10">
    <property type="match status" value="1"/>
</dbReference>
<dbReference type="Gene3D" id="1.10.287.80">
    <property type="entry name" value="ATP synthase, gamma subunit, helix hairpin domain"/>
    <property type="match status" value="1"/>
</dbReference>
<dbReference type="HAMAP" id="MF_00815">
    <property type="entry name" value="ATP_synth_gamma_bact"/>
    <property type="match status" value="1"/>
</dbReference>
<dbReference type="InterPro" id="IPR035968">
    <property type="entry name" value="ATP_synth_F1_ATPase_gsu"/>
</dbReference>
<dbReference type="InterPro" id="IPR000131">
    <property type="entry name" value="ATP_synth_F1_gsu"/>
</dbReference>
<dbReference type="InterPro" id="IPR023632">
    <property type="entry name" value="ATP_synth_F1_gsu_CS"/>
</dbReference>
<dbReference type="NCBIfam" id="TIGR01146">
    <property type="entry name" value="ATPsyn_F1gamma"/>
    <property type="match status" value="1"/>
</dbReference>
<dbReference type="NCBIfam" id="NF004144">
    <property type="entry name" value="PRK05621.1-1"/>
    <property type="match status" value="1"/>
</dbReference>
<dbReference type="PANTHER" id="PTHR11693">
    <property type="entry name" value="ATP SYNTHASE GAMMA CHAIN"/>
    <property type="match status" value="1"/>
</dbReference>
<dbReference type="PANTHER" id="PTHR11693:SF22">
    <property type="entry name" value="ATP SYNTHASE SUBUNIT GAMMA, MITOCHONDRIAL"/>
    <property type="match status" value="1"/>
</dbReference>
<dbReference type="Pfam" id="PF00231">
    <property type="entry name" value="ATP-synt"/>
    <property type="match status" value="1"/>
</dbReference>
<dbReference type="PRINTS" id="PR00126">
    <property type="entry name" value="ATPASEGAMMA"/>
</dbReference>
<dbReference type="SUPFAM" id="SSF52943">
    <property type="entry name" value="ATP synthase (F1-ATPase), gamma subunit"/>
    <property type="match status" value="1"/>
</dbReference>
<dbReference type="PROSITE" id="PS00153">
    <property type="entry name" value="ATPASE_GAMMA"/>
    <property type="match status" value="1"/>
</dbReference>
<sequence length="287" mass="31528">MAGAKEIRSKIASVQNTQKITKAMEMVAASKMRKSQDRMAASRPYAETMRKVIGHLANGNLEYKHPYLEERDVKRVGYLVVSTDRGLCGGLNINLFKKLLADMKAWSDKGVQCELAMIGSKGVSFFNSVGGNVVAQVTGMGDNPSLSELIGPVKVMLQAYDEGRLDKLYIVSNKFINTMSQVPTITQLLPLPASEDDDLKRTAWDYLYEPDPKALLDTLLRRYVESQVYQGVVENLASEQAARMVAMKAATDNGGSLIKELQLVYNKARQASITQELTEIVSGAAAV</sequence>
<evidence type="ECO:0000255" key="1">
    <source>
        <dbReference type="HAMAP-Rule" id="MF_00815"/>
    </source>
</evidence>
<name>ATPG_SALPK</name>
<keyword id="KW-0066">ATP synthesis</keyword>
<keyword id="KW-0997">Cell inner membrane</keyword>
<keyword id="KW-1003">Cell membrane</keyword>
<keyword id="KW-0139">CF(1)</keyword>
<keyword id="KW-0375">Hydrogen ion transport</keyword>
<keyword id="KW-0406">Ion transport</keyword>
<keyword id="KW-0472">Membrane</keyword>
<keyword id="KW-0813">Transport</keyword>
<reference key="1">
    <citation type="journal article" date="2009" name="BMC Genomics">
        <title>Pseudogene accumulation in the evolutionary histories of Salmonella enterica serovars Paratyphi A and Typhi.</title>
        <authorList>
            <person name="Holt K.E."/>
            <person name="Thomson N.R."/>
            <person name="Wain J."/>
            <person name="Langridge G.C."/>
            <person name="Hasan R."/>
            <person name="Bhutta Z.A."/>
            <person name="Quail M.A."/>
            <person name="Norbertczak H."/>
            <person name="Walker D."/>
            <person name="Simmonds M."/>
            <person name="White B."/>
            <person name="Bason N."/>
            <person name="Mungall K."/>
            <person name="Dougan G."/>
            <person name="Parkhill J."/>
        </authorList>
    </citation>
    <scope>NUCLEOTIDE SEQUENCE [LARGE SCALE GENOMIC DNA]</scope>
    <source>
        <strain>AKU_12601</strain>
    </source>
</reference>
<comment type="function">
    <text evidence="1">Produces ATP from ADP in the presence of a proton gradient across the membrane. The gamma chain is believed to be important in regulating ATPase activity and the flow of protons through the CF(0) complex.</text>
</comment>
<comment type="subunit">
    <text evidence="1">F-type ATPases have 2 components, CF(1) - the catalytic core - and CF(0) - the membrane proton channel. CF(1) has five subunits: alpha(3), beta(3), gamma(1), delta(1), epsilon(1). CF(0) has three main subunits: a, b and c.</text>
</comment>
<comment type="subcellular location">
    <subcellularLocation>
        <location evidence="1">Cell inner membrane</location>
        <topology evidence="1">Peripheral membrane protein</topology>
    </subcellularLocation>
</comment>
<comment type="similarity">
    <text evidence="1">Belongs to the ATPase gamma chain family.</text>
</comment>
<feature type="chain" id="PRO_1000134204" description="ATP synthase gamma chain">
    <location>
        <begin position="1"/>
        <end position="287"/>
    </location>
</feature>
<organism>
    <name type="scientific">Salmonella paratyphi A (strain AKU_12601)</name>
    <dbReference type="NCBI Taxonomy" id="554290"/>
    <lineage>
        <taxon>Bacteria</taxon>
        <taxon>Pseudomonadati</taxon>
        <taxon>Pseudomonadota</taxon>
        <taxon>Gammaproteobacteria</taxon>
        <taxon>Enterobacterales</taxon>
        <taxon>Enterobacteriaceae</taxon>
        <taxon>Salmonella</taxon>
    </lineage>
</organism>